<comment type="function">
    <text evidence="1">ATPase subunit of a proteasome-like degradation complex; this subunit has chaperone activity. The binding of ATP and its subsequent hydrolysis by HslU are essential for unfolding of protein substrates subsequently hydrolyzed by HslV. HslU recognizes the N-terminal part of its protein substrates and unfolds these before they are guided to HslV for hydrolysis.</text>
</comment>
<comment type="subunit">
    <text evidence="1">A double ring-shaped homohexamer of HslV is capped on each side by a ring-shaped HslU homohexamer. The assembly of the HslU/HslV complex is dependent on binding of ATP.</text>
</comment>
<comment type="subcellular location">
    <subcellularLocation>
        <location evidence="1">Cytoplasm</location>
    </subcellularLocation>
</comment>
<comment type="similarity">
    <text evidence="1">Belongs to the ClpX chaperone family. HslU subfamily.</text>
</comment>
<sequence length="442" mass="49986">MSEMTPREIVHELDAHIIGQQKAKRSVAVALRNRWRRMQLDADFRQEVTPKNILMIGPTGVGKTEIARRLAKLANAPFIKVEATKFTEVGYVGKEVEQIIRDLTDIAIKLTREQQMGKCRQRAEEHAEERILDALLPKPKNDWESTETDSSSNTRQVFRKKLREGQLDDKEIDIDVAQPQIGVEIMSPPGMEEMTNQLQSLFKNMGQAPAKRRKMKIKEAFKLLIEEEAAKLVNQEDLKEQAIEMVEQHGIVFLDEIDKICKRGETSGPDVSREGVQRDLLPLVEGCTVTTKHGMVKTDHILFIASGAFQMSKPSDLIPELQGRLPIRVELDALSADDFKRILTEPHASLTEQYIALMNTEGVKVEFSESGIDSIAKAAWQVNERTENIGARRLHTVMEKLMEDISYEASEKSGSAFVIDADYVSAHLDNLVQDEDLSRFIL</sequence>
<accession>A6WIH5</accession>
<gene>
    <name evidence="1" type="primary">hslU</name>
    <name type="ordered locus">Shew185_0446</name>
</gene>
<name>HSLU_SHEB8</name>
<keyword id="KW-0067">ATP-binding</keyword>
<keyword id="KW-0143">Chaperone</keyword>
<keyword id="KW-0963">Cytoplasm</keyword>
<keyword id="KW-0547">Nucleotide-binding</keyword>
<keyword id="KW-0346">Stress response</keyword>
<reference key="1">
    <citation type="submission" date="2007-07" db="EMBL/GenBank/DDBJ databases">
        <title>Complete sequence of chromosome of Shewanella baltica OS185.</title>
        <authorList>
            <consortium name="US DOE Joint Genome Institute"/>
            <person name="Copeland A."/>
            <person name="Lucas S."/>
            <person name="Lapidus A."/>
            <person name="Barry K."/>
            <person name="Glavina del Rio T."/>
            <person name="Dalin E."/>
            <person name="Tice H."/>
            <person name="Pitluck S."/>
            <person name="Sims D."/>
            <person name="Brettin T."/>
            <person name="Bruce D."/>
            <person name="Detter J.C."/>
            <person name="Han C."/>
            <person name="Schmutz J."/>
            <person name="Larimer F."/>
            <person name="Land M."/>
            <person name="Hauser L."/>
            <person name="Kyrpides N."/>
            <person name="Mikhailova N."/>
            <person name="Brettar I."/>
            <person name="Rodrigues J."/>
            <person name="Konstantinidis K."/>
            <person name="Tiedje J."/>
            <person name="Richardson P."/>
        </authorList>
    </citation>
    <scope>NUCLEOTIDE SEQUENCE [LARGE SCALE GENOMIC DNA]</scope>
    <source>
        <strain>OS185</strain>
    </source>
</reference>
<evidence type="ECO:0000255" key="1">
    <source>
        <dbReference type="HAMAP-Rule" id="MF_00249"/>
    </source>
</evidence>
<evidence type="ECO:0000256" key="2">
    <source>
        <dbReference type="SAM" id="MobiDB-lite"/>
    </source>
</evidence>
<feature type="chain" id="PRO_1000012801" description="ATP-dependent protease ATPase subunit HslU">
    <location>
        <begin position="1"/>
        <end position="442"/>
    </location>
</feature>
<feature type="region of interest" description="Disordered" evidence="2">
    <location>
        <begin position="136"/>
        <end position="157"/>
    </location>
</feature>
<feature type="binding site" evidence="1">
    <location>
        <position position="18"/>
    </location>
    <ligand>
        <name>ATP</name>
        <dbReference type="ChEBI" id="CHEBI:30616"/>
    </ligand>
</feature>
<feature type="binding site" evidence="1">
    <location>
        <begin position="60"/>
        <end position="65"/>
    </location>
    <ligand>
        <name>ATP</name>
        <dbReference type="ChEBI" id="CHEBI:30616"/>
    </ligand>
</feature>
<feature type="binding site" evidence="1">
    <location>
        <position position="255"/>
    </location>
    <ligand>
        <name>ATP</name>
        <dbReference type="ChEBI" id="CHEBI:30616"/>
    </ligand>
</feature>
<feature type="binding site" evidence="1">
    <location>
        <position position="320"/>
    </location>
    <ligand>
        <name>ATP</name>
        <dbReference type="ChEBI" id="CHEBI:30616"/>
    </ligand>
</feature>
<feature type="binding site" evidence="1">
    <location>
        <position position="392"/>
    </location>
    <ligand>
        <name>ATP</name>
        <dbReference type="ChEBI" id="CHEBI:30616"/>
    </ligand>
</feature>
<dbReference type="EMBL" id="CP000753">
    <property type="protein sequence ID" value="ABS06614.1"/>
    <property type="molecule type" value="Genomic_DNA"/>
</dbReference>
<dbReference type="RefSeq" id="WP_012088090.1">
    <property type="nucleotide sequence ID" value="NC_009665.1"/>
</dbReference>
<dbReference type="SMR" id="A6WIH5"/>
<dbReference type="KEGG" id="sbm:Shew185_0446"/>
<dbReference type="HOGENOM" id="CLU_033123_0_0_6"/>
<dbReference type="GO" id="GO:0009376">
    <property type="term" value="C:HslUV protease complex"/>
    <property type="evidence" value="ECO:0007669"/>
    <property type="project" value="UniProtKB-UniRule"/>
</dbReference>
<dbReference type="GO" id="GO:0005524">
    <property type="term" value="F:ATP binding"/>
    <property type="evidence" value="ECO:0007669"/>
    <property type="project" value="UniProtKB-UniRule"/>
</dbReference>
<dbReference type="GO" id="GO:0016887">
    <property type="term" value="F:ATP hydrolysis activity"/>
    <property type="evidence" value="ECO:0007669"/>
    <property type="project" value="InterPro"/>
</dbReference>
<dbReference type="GO" id="GO:0008233">
    <property type="term" value="F:peptidase activity"/>
    <property type="evidence" value="ECO:0007669"/>
    <property type="project" value="InterPro"/>
</dbReference>
<dbReference type="GO" id="GO:0036402">
    <property type="term" value="F:proteasome-activating activity"/>
    <property type="evidence" value="ECO:0007669"/>
    <property type="project" value="UniProtKB-UniRule"/>
</dbReference>
<dbReference type="GO" id="GO:0043335">
    <property type="term" value="P:protein unfolding"/>
    <property type="evidence" value="ECO:0007669"/>
    <property type="project" value="UniProtKB-UniRule"/>
</dbReference>
<dbReference type="GO" id="GO:0051603">
    <property type="term" value="P:proteolysis involved in protein catabolic process"/>
    <property type="evidence" value="ECO:0007669"/>
    <property type="project" value="TreeGrafter"/>
</dbReference>
<dbReference type="CDD" id="cd19498">
    <property type="entry name" value="RecA-like_HslU"/>
    <property type="match status" value="1"/>
</dbReference>
<dbReference type="FunFam" id="1.10.8.10:FF:000028">
    <property type="entry name" value="ATP-dependent protease ATPase subunit HslU"/>
    <property type="match status" value="1"/>
</dbReference>
<dbReference type="FunFam" id="1.10.8.60:FF:000027">
    <property type="entry name" value="ATP-dependent protease ATPase subunit HslU"/>
    <property type="match status" value="1"/>
</dbReference>
<dbReference type="FunFam" id="3.40.50.300:FF:000213">
    <property type="entry name" value="ATP-dependent protease ATPase subunit HslU"/>
    <property type="match status" value="1"/>
</dbReference>
<dbReference type="FunFam" id="3.40.50.300:FF:000220">
    <property type="entry name" value="ATP-dependent protease ATPase subunit HslU"/>
    <property type="match status" value="1"/>
</dbReference>
<dbReference type="Gene3D" id="1.10.8.60">
    <property type="match status" value="1"/>
</dbReference>
<dbReference type="Gene3D" id="1.10.8.10">
    <property type="entry name" value="DNA helicase RuvA subunit, C-terminal domain"/>
    <property type="match status" value="1"/>
</dbReference>
<dbReference type="Gene3D" id="3.40.50.300">
    <property type="entry name" value="P-loop containing nucleotide triphosphate hydrolases"/>
    <property type="match status" value="2"/>
</dbReference>
<dbReference type="HAMAP" id="MF_00249">
    <property type="entry name" value="HslU"/>
    <property type="match status" value="1"/>
</dbReference>
<dbReference type="InterPro" id="IPR003593">
    <property type="entry name" value="AAA+_ATPase"/>
</dbReference>
<dbReference type="InterPro" id="IPR050052">
    <property type="entry name" value="ATP-dep_Clp_protease_ClpX"/>
</dbReference>
<dbReference type="InterPro" id="IPR003959">
    <property type="entry name" value="ATPase_AAA_core"/>
</dbReference>
<dbReference type="InterPro" id="IPR019489">
    <property type="entry name" value="Clp_ATPase_C"/>
</dbReference>
<dbReference type="InterPro" id="IPR004491">
    <property type="entry name" value="HslU"/>
</dbReference>
<dbReference type="InterPro" id="IPR027417">
    <property type="entry name" value="P-loop_NTPase"/>
</dbReference>
<dbReference type="NCBIfam" id="TIGR00390">
    <property type="entry name" value="hslU"/>
    <property type="match status" value="1"/>
</dbReference>
<dbReference type="NCBIfam" id="NF003544">
    <property type="entry name" value="PRK05201.1"/>
    <property type="match status" value="1"/>
</dbReference>
<dbReference type="PANTHER" id="PTHR48102">
    <property type="entry name" value="ATP-DEPENDENT CLP PROTEASE ATP-BINDING SUBUNIT CLPX-LIKE, MITOCHONDRIAL-RELATED"/>
    <property type="match status" value="1"/>
</dbReference>
<dbReference type="PANTHER" id="PTHR48102:SF3">
    <property type="entry name" value="ATP-DEPENDENT PROTEASE ATPASE SUBUNIT HSLU"/>
    <property type="match status" value="1"/>
</dbReference>
<dbReference type="Pfam" id="PF00004">
    <property type="entry name" value="AAA"/>
    <property type="match status" value="1"/>
</dbReference>
<dbReference type="Pfam" id="PF07724">
    <property type="entry name" value="AAA_2"/>
    <property type="match status" value="1"/>
</dbReference>
<dbReference type="SMART" id="SM00382">
    <property type="entry name" value="AAA"/>
    <property type="match status" value="1"/>
</dbReference>
<dbReference type="SMART" id="SM01086">
    <property type="entry name" value="ClpB_D2-small"/>
    <property type="match status" value="1"/>
</dbReference>
<dbReference type="SUPFAM" id="SSF52540">
    <property type="entry name" value="P-loop containing nucleoside triphosphate hydrolases"/>
    <property type="match status" value="1"/>
</dbReference>
<protein>
    <recommendedName>
        <fullName evidence="1">ATP-dependent protease ATPase subunit HslU</fullName>
    </recommendedName>
    <alternativeName>
        <fullName evidence="1">Unfoldase HslU</fullName>
    </alternativeName>
</protein>
<proteinExistence type="inferred from homology"/>
<organism>
    <name type="scientific">Shewanella baltica (strain OS185)</name>
    <dbReference type="NCBI Taxonomy" id="402882"/>
    <lineage>
        <taxon>Bacteria</taxon>
        <taxon>Pseudomonadati</taxon>
        <taxon>Pseudomonadota</taxon>
        <taxon>Gammaproteobacteria</taxon>
        <taxon>Alteromonadales</taxon>
        <taxon>Shewanellaceae</taxon>
        <taxon>Shewanella</taxon>
    </lineage>
</organism>